<reference key="1">
    <citation type="journal article" date="1999" name="Nat. Genet.">
        <title>Comparative genomes of Chlamydia pneumoniae and C. trachomatis.</title>
        <authorList>
            <person name="Kalman S."/>
            <person name="Mitchell W.P."/>
            <person name="Marathe R."/>
            <person name="Lammel C.J."/>
            <person name="Fan J."/>
            <person name="Hyman R.W."/>
            <person name="Olinger L."/>
            <person name="Grimwood J."/>
            <person name="Davis R.W."/>
            <person name="Stephens R.S."/>
        </authorList>
    </citation>
    <scope>NUCLEOTIDE SEQUENCE [LARGE SCALE GENOMIC DNA]</scope>
    <source>
        <strain>CWL029</strain>
    </source>
</reference>
<reference key="2">
    <citation type="journal article" date="2000" name="Nucleic Acids Res.">
        <title>Genome sequences of Chlamydia trachomatis MoPn and Chlamydia pneumoniae AR39.</title>
        <authorList>
            <person name="Read T.D."/>
            <person name="Brunham R.C."/>
            <person name="Shen C."/>
            <person name="Gill S.R."/>
            <person name="Heidelberg J.F."/>
            <person name="White O."/>
            <person name="Hickey E.K."/>
            <person name="Peterson J.D."/>
            <person name="Utterback T.R."/>
            <person name="Berry K.J."/>
            <person name="Bass S."/>
            <person name="Linher K.D."/>
            <person name="Weidman J.F."/>
            <person name="Khouri H.M."/>
            <person name="Craven B."/>
            <person name="Bowman C."/>
            <person name="Dodson R.J."/>
            <person name="Gwinn M.L."/>
            <person name="Nelson W.C."/>
            <person name="DeBoy R.T."/>
            <person name="Kolonay J.F."/>
            <person name="McClarty G."/>
            <person name="Salzberg S.L."/>
            <person name="Eisen J.A."/>
            <person name="Fraser C.M."/>
        </authorList>
    </citation>
    <scope>NUCLEOTIDE SEQUENCE [LARGE SCALE GENOMIC DNA]</scope>
    <source>
        <strain>AR39</strain>
    </source>
</reference>
<reference key="3">
    <citation type="journal article" date="2000" name="Nucleic Acids Res.">
        <title>Comparison of whole genome sequences of Chlamydia pneumoniae J138 from Japan and CWL029 from USA.</title>
        <authorList>
            <person name="Shirai M."/>
            <person name="Hirakawa H."/>
            <person name="Kimoto M."/>
            <person name="Tabuchi M."/>
            <person name="Kishi F."/>
            <person name="Ouchi K."/>
            <person name="Shiba T."/>
            <person name="Ishii K."/>
            <person name="Hattori M."/>
            <person name="Kuhara S."/>
            <person name="Nakazawa T."/>
        </authorList>
    </citation>
    <scope>NUCLEOTIDE SEQUENCE [LARGE SCALE GENOMIC DNA]</scope>
    <source>
        <strain>J138</strain>
    </source>
</reference>
<reference key="4">
    <citation type="submission" date="2002-05" db="EMBL/GenBank/DDBJ databases">
        <title>The genome sequence of Chlamydia pneumoniae TW183 and comparison with other Chlamydia strains based on whole genome sequence analysis.</title>
        <authorList>
            <person name="Geng M.M."/>
            <person name="Schuhmacher A."/>
            <person name="Muehldorfer I."/>
            <person name="Bensch K.W."/>
            <person name="Schaefer K.P."/>
            <person name="Schneider S."/>
            <person name="Pohl T."/>
            <person name="Essig A."/>
            <person name="Marre R."/>
            <person name="Melchers K."/>
        </authorList>
    </citation>
    <scope>NUCLEOTIDE SEQUENCE [LARGE SCALE GENOMIC DNA]</scope>
    <source>
        <strain>TW-183</strain>
    </source>
</reference>
<dbReference type="EC" id="3.5.4.26"/>
<dbReference type="EC" id="1.1.1.193"/>
<dbReference type="EMBL" id="AE001363">
    <property type="protein sequence ID" value="AAD19009.1"/>
    <property type="molecule type" value="Genomic_DNA"/>
</dbReference>
<dbReference type="EMBL" id="AE002161">
    <property type="protein sequence ID" value="AAF38776.1"/>
    <property type="molecule type" value="Genomic_DNA"/>
</dbReference>
<dbReference type="EMBL" id="BA000008">
    <property type="protein sequence ID" value="BAA99079.1"/>
    <property type="molecule type" value="Genomic_DNA"/>
</dbReference>
<dbReference type="EMBL" id="AE009440">
    <property type="protein sequence ID" value="AAP98829.1"/>
    <property type="molecule type" value="Genomic_DNA"/>
</dbReference>
<dbReference type="PIR" id="E86599">
    <property type="entry name" value="E86599"/>
</dbReference>
<dbReference type="PIR" id="G72026">
    <property type="entry name" value="G72026"/>
</dbReference>
<dbReference type="RefSeq" id="NP_225066.1">
    <property type="nucleotide sequence ID" value="NC_000922.1"/>
</dbReference>
<dbReference type="RefSeq" id="WP_010883506.1">
    <property type="nucleotide sequence ID" value="NZ_LN847257.1"/>
</dbReference>
<dbReference type="SMR" id="Q9Z735"/>
<dbReference type="STRING" id="406984.CPK_ORF00278"/>
<dbReference type="GeneID" id="45050924"/>
<dbReference type="KEGG" id="cpa:CP_0998"/>
<dbReference type="KEGG" id="cpj:ribD"/>
<dbReference type="KEGG" id="cpn:CPn_0871"/>
<dbReference type="KEGG" id="cpt:CpB0900"/>
<dbReference type="PATRIC" id="fig|115713.3.peg.951"/>
<dbReference type="eggNOG" id="COG0117">
    <property type="taxonomic scope" value="Bacteria"/>
</dbReference>
<dbReference type="eggNOG" id="COG1985">
    <property type="taxonomic scope" value="Bacteria"/>
</dbReference>
<dbReference type="HOGENOM" id="CLU_036590_1_2_0"/>
<dbReference type="OrthoDB" id="9800865at2"/>
<dbReference type="UniPathway" id="UPA00275">
    <property type="reaction ID" value="UER00401"/>
</dbReference>
<dbReference type="UniPathway" id="UPA00275">
    <property type="reaction ID" value="UER00402"/>
</dbReference>
<dbReference type="Proteomes" id="UP000000583">
    <property type="component" value="Chromosome"/>
</dbReference>
<dbReference type="Proteomes" id="UP000000801">
    <property type="component" value="Chromosome"/>
</dbReference>
<dbReference type="GO" id="GO:0008703">
    <property type="term" value="F:5-amino-6-(5-phosphoribosylamino)uracil reductase activity"/>
    <property type="evidence" value="ECO:0007669"/>
    <property type="project" value="UniProtKB-EC"/>
</dbReference>
<dbReference type="GO" id="GO:0008835">
    <property type="term" value="F:diaminohydroxyphosphoribosylaminopyrimidine deaminase activity"/>
    <property type="evidence" value="ECO:0007669"/>
    <property type="project" value="UniProtKB-EC"/>
</dbReference>
<dbReference type="GO" id="GO:0050661">
    <property type="term" value="F:NADP binding"/>
    <property type="evidence" value="ECO:0007669"/>
    <property type="project" value="InterPro"/>
</dbReference>
<dbReference type="GO" id="GO:0008270">
    <property type="term" value="F:zinc ion binding"/>
    <property type="evidence" value="ECO:0007669"/>
    <property type="project" value="InterPro"/>
</dbReference>
<dbReference type="GO" id="GO:0009231">
    <property type="term" value="P:riboflavin biosynthetic process"/>
    <property type="evidence" value="ECO:0007669"/>
    <property type="project" value="UniProtKB-UniPathway"/>
</dbReference>
<dbReference type="CDD" id="cd01284">
    <property type="entry name" value="Riboflavin_deaminase-reductase"/>
    <property type="match status" value="1"/>
</dbReference>
<dbReference type="Gene3D" id="3.40.140.10">
    <property type="entry name" value="Cytidine Deaminase, domain 2"/>
    <property type="match status" value="1"/>
</dbReference>
<dbReference type="Gene3D" id="3.40.430.10">
    <property type="entry name" value="Dihydrofolate Reductase, subunit A"/>
    <property type="match status" value="1"/>
</dbReference>
<dbReference type="InterPro" id="IPR016192">
    <property type="entry name" value="APOBEC/CMP_deaminase_Zn-bd"/>
</dbReference>
<dbReference type="InterPro" id="IPR002125">
    <property type="entry name" value="CMP_dCMP_dom"/>
</dbReference>
<dbReference type="InterPro" id="IPR016193">
    <property type="entry name" value="Cytidine_deaminase-like"/>
</dbReference>
<dbReference type="InterPro" id="IPR024072">
    <property type="entry name" value="DHFR-like_dom_sf"/>
</dbReference>
<dbReference type="InterPro" id="IPR004794">
    <property type="entry name" value="Eubact_RibD"/>
</dbReference>
<dbReference type="InterPro" id="IPR011549">
    <property type="entry name" value="RibD_C"/>
</dbReference>
<dbReference type="InterPro" id="IPR002734">
    <property type="entry name" value="RibDG_C"/>
</dbReference>
<dbReference type="InterPro" id="IPR050765">
    <property type="entry name" value="Riboflavin_Biosynth_HTPR"/>
</dbReference>
<dbReference type="NCBIfam" id="TIGR00326">
    <property type="entry name" value="eubact_ribD"/>
    <property type="match status" value="1"/>
</dbReference>
<dbReference type="NCBIfam" id="TIGR00227">
    <property type="entry name" value="ribD_Cterm"/>
    <property type="match status" value="1"/>
</dbReference>
<dbReference type="PANTHER" id="PTHR38011:SF7">
    <property type="entry name" value="2,5-DIAMINO-6-RIBOSYLAMINO-4(3H)-PYRIMIDINONE 5'-PHOSPHATE REDUCTASE"/>
    <property type="match status" value="1"/>
</dbReference>
<dbReference type="PANTHER" id="PTHR38011">
    <property type="entry name" value="DIHYDROFOLATE REDUCTASE FAMILY PROTEIN (AFU_ORTHOLOGUE AFUA_8G06820)"/>
    <property type="match status" value="1"/>
</dbReference>
<dbReference type="Pfam" id="PF00383">
    <property type="entry name" value="dCMP_cyt_deam_1"/>
    <property type="match status" value="1"/>
</dbReference>
<dbReference type="Pfam" id="PF01872">
    <property type="entry name" value="RibD_C"/>
    <property type="match status" value="1"/>
</dbReference>
<dbReference type="PIRSF" id="PIRSF006769">
    <property type="entry name" value="RibD"/>
    <property type="match status" value="1"/>
</dbReference>
<dbReference type="SUPFAM" id="SSF53927">
    <property type="entry name" value="Cytidine deaminase-like"/>
    <property type="match status" value="1"/>
</dbReference>
<dbReference type="SUPFAM" id="SSF53597">
    <property type="entry name" value="Dihydrofolate reductase-like"/>
    <property type="match status" value="1"/>
</dbReference>
<dbReference type="PROSITE" id="PS00903">
    <property type="entry name" value="CYT_DCMP_DEAMINASES_1"/>
    <property type="match status" value="1"/>
</dbReference>
<dbReference type="PROSITE" id="PS51747">
    <property type="entry name" value="CYT_DCMP_DEAMINASES_2"/>
    <property type="match status" value="1"/>
</dbReference>
<comment type="function">
    <text>Converts 2,5-diamino-6-(ribosylamino)-4(3h)-pyrimidinone 5'-phosphate into 5-amino-6-(ribosylamino)-2,4(1h,3h)-pyrimidinedione 5'-phosphate.</text>
</comment>
<comment type="catalytic activity">
    <reaction>
        <text>2,5-diamino-6-hydroxy-4-(5-phosphoribosylamino)-pyrimidine + H2O + H(+) = 5-amino-6-(5-phospho-D-ribosylamino)uracil + NH4(+)</text>
        <dbReference type="Rhea" id="RHEA:21868"/>
        <dbReference type="ChEBI" id="CHEBI:15377"/>
        <dbReference type="ChEBI" id="CHEBI:15378"/>
        <dbReference type="ChEBI" id="CHEBI:28938"/>
        <dbReference type="ChEBI" id="CHEBI:58453"/>
        <dbReference type="ChEBI" id="CHEBI:58614"/>
        <dbReference type="EC" id="3.5.4.26"/>
    </reaction>
</comment>
<comment type="catalytic activity">
    <reaction>
        <text>5-amino-6-(5-phospho-D-ribitylamino)uracil + NADP(+) = 5-amino-6-(5-phospho-D-ribosylamino)uracil + NADPH + H(+)</text>
        <dbReference type="Rhea" id="RHEA:17845"/>
        <dbReference type="ChEBI" id="CHEBI:15378"/>
        <dbReference type="ChEBI" id="CHEBI:57783"/>
        <dbReference type="ChEBI" id="CHEBI:58349"/>
        <dbReference type="ChEBI" id="CHEBI:58421"/>
        <dbReference type="ChEBI" id="CHEBI:58453"/>
        <dbReference type="EC" id="1.1.1.193"/>
    </reaction>
</comment>
<comment type="cofactor">
    <cofactor evidence="1">
        <name>Zn(2+)</name>
        <dbReference type="ChEBI" id="CHEBI:29105"/>
    </cofactor>
    <text evidence="1">Binds 1 zinc ion.</text>
</comment>
<comment type="pathway">
    <text>Cofactor biosynthesis; riboflavin biosynthesis; 5-amino-6-(D-ribitylamino)uracil from GTP: step 2/4.</text>
</comment>
<comment type="pathway">
    <text>Cofactor biosynthesis; riboflavin biosynthesis; 5-amino-6-(D-ribitylamino)uracil from GTP: step 3/4.</text>
</comment>
<comment type="similarity">
    <text evidence="3">In the N-terminal section; belongs to the cytidine and deoxycytidylate deaminase family.</text>
</comment>
<comment type="similarity">
    <text evidence="3">In the C-terminal section; belongs to the HTP reductase family.</text>
</comment>
<organism>
    <name type="scientific">Chlamydia pneumoniae</name>
    <name type="common">Chlamydophila pneumoniae</name>
    <dbReference type="NCBI Taxonomy" id="83558"/>
    <lineage>
        <taxon>Bacteria</taxon>
        <taxon>Pseudomonadati</taxon>
        <taxon>Chlamydiota</taxon>
        <taxon>Chlamydiia</taxon>
        <taxon>Chlamydiales</taxon>
        <taxon>Chlamydiaceae</taxon>
        <taxon>Chlamydia/Chlamydophila group</taxon>
        <taxon>Chlamydia</taxon>
    </lineage>
</organism>
<name>RIBD_CHLPN</name>
<evidence type="ECO:0000250" key="1"/>
<evidence type="ECO:0000255" key="2">
    <source>
        <dbReference type="PROSITE-ProRule" id="PRU01083"/>
    </source>
</evidence>
<evidence type="ECO:0000305" key="3"/>
<gene>
    <name type="primary">ribD</name>
    <name type="synonym">ribG</name>
    <name type="ordered locus">CPn_0871</name>
    <name type="ordered locus">CP_0998</name>
    <name type="ordered locus">CpB0900</name>
</gene>
<accession>Q9Z735</accession>
<accession>Q9JQ54</accession>
<sequence length="376" mass="41209">MEDFSEQQLFFMRRAIEIGEKGRITAPPNPWVGCVVVQENRIIGEGFHAYAGGPHAEELAIQNASMPISGSDVYVSLEPCSHFGSCPPCANLLIKHKVSRVFVALVDPDPKVAGQGIAMLRQAGIQVYVGIGESEAQASLQPYLYQRTHNFPWTILKSAASVDGQVADSQGKSQWITCPEARHDVGKLRAESQAILVGSRTVLSDDPWLTARQPQGMLYPKQPLRVVLDSRGSVPPTSKVFDKTSPTLYVTTERCPENYIKVLDSLDVPVLLTESTPSGVDLHKVYEYLAQKKILQVLVEGGTTLHTSLLKERFVNSLVLYSGPMILGDQKRPLVGVLGNLLESASPLTLKSSQILGNSLKVVWEISPQVFEPIRN</sequence>
<proteinExistence type="inferred from homology"/>
<protein>
    <recommendedName>
        <fullName>Riboflavin biosynthesis protein RibD</fullName>
    </recommendedName>
    <domain>
        <recommendedName>
            <fullName>Diaminohydroxyphosphoribosylaminopyrimidine deaminase</fullName>
            <shortName>DRAP deaminase</shortName>
            <ecNumber>3.5.4.26</ecNumber>
        </recommendedName>
        <alternativeName>
            <fullName>Riboflavin-specific deaminase</fullName>
        </alternativeName>
    </domain>
    <domain>
        <recommendedName>
            <fullName>5-amino-6-(5-phosphoribosylamino)uracil reductase</fullName>
            <ecNumber>1.1.1.193</ecNumber>
        </recommendedName>
        <alternativeName>
            <fullName>HTP reductase</fullName>
        </alternativeName>
    </domain>
</protein>
<feature type="chain" id="PRO_0000171718" description="Riboflavin biosynthesis protein RibD">
    <location>
        <begin position="1"/>
        <end position="376"/>
    </location>
</feature>
<feature type="domain" description="CMP/dCMP-type deaminase" evidence="2">
    <location>
        <begin position="6"/>
        <end position="128"/>
    </location>
</feature>
<feature type="region of interest" description="Deaminase">
    <location>
        <begin position="1"/>
        <end position="150"/>
    </location>
</feature>
<feature type="region of interest" description="Reductase">
    <location>
        <begin position="151"/>
        <end position="376"/>
    </location>
</feature>
<feature type="active site" description="Proton donor" evidence="1">
    <location>
        <position position="57"/>
    </location>
</feature>
<feature type="binding site" evidence="1">
    <location>
        <position position="55"/>
    </location>
    <ligand>
        <name>Zn(2+)</name>
        <dbReference type="ChEBI" id="CHEBI:29105"/>
        <note>catalytic</note>
    </ligand>
</feature>
<feature type="binding site" evidence="1">
    <location>
        <position position="80"/>
    </location>
    <ligand>
        <name>Zn(2+)</name>
        <dbReference type="ChEBI" id="CHEBI:29105"/>
        <note>catalytic</note>
    </ligand>
</feature>
<feature type="binding site" evidence="1">
    <location>
        <position position="89"/>
    </location>
    <ligand>
        <name>Zn(2+)</name>
        <dbReference type="ChEBI" id="CHEBI:29105"/>
        <note>catalytic</note>
    </ligand>
</feature>
<feature type="binding site" evidence="1">
    <location>
        <position position="159"/>
    </location>
    <ligand>
        <name>NADP(+)</name>
        <dbReference type="ChEBI" id="CHEBI:58349"/>
    </ligand>
</feature>
<feature type="binding site" evidence="1">
    <location>
        <position position="173"/>
    </location>
    <ligand>
        <name>substrate</name>
    </ligand>
</feature>
<feature type="binding site" evidence="1">
    <location>
        <position position="175"/>
    </location>
    <ligand>
        <name>NADP(+)</name>
        <dbReference type="ChEBI" id="CHEBI:58349"/>
    </ligand>
</feature>
<feature type="binding site" evidence="1">
    <location>
        <position position="189"/>
    </location>
    <ligand>
        <name>substrate</name>
    </ligand>
</feature>
<feature type="binding site" evidence="1">
    <location>
        <position position="201"/>
    </location>
    <ligand>
        <name>NADP(+)</name>
        <dbReference type="ChEBI" id="CHEBI:58349"/>
    </ligand>
</feature>
<feature type="binding site" evidence="1">
    <location>
        <position position="205"/>
    </location>
    <ligand>
        <name>NADP(+)</name>
        <dbReference type="ChEBI" id="CHEBI:58349"/>
    </ligand>
</feature>
<feature type="binding site" evidence="1">
    <location>
        <position position="209"/>
    </location>
    <ligand>
        <name>substrate</name>
    </ligand>
</feature>
<feature type="binding site" evidence="1">
    <location>
        <position position="212"/>
    </location>
    <ligand>
        <name>substrate</name>
    </ligand>
</feature>
<feature type="binding site" evidence="1">
    <location>
        <position position="230"/>
    </location>
    <ligand>
        <name>NADP(+)</name>
        <dbReference type="ChEBI" id="CHEBI:58349"/>
    </ligand>
</feature>
<feature type="binding site" evidence="1">
    <location>
        <position position="300"/>
    </location>
    <ligand>
        <name>substrate</name>
    </ligand>
</feature>
<feature type="binding site" evidence="1">
    <location>
        <begin position="302"/>
        <end position="308"/>
    </location>
    <ligand>
        <name>NADP(+)</name>
        <dbReference type="ChEBI" id="CHEBI:58349"/>
    </ligand>
</feature>
<keyword id="KW-0378">Hydrolase</keyword>
<keyword id="KW-0479">Metal-binding</keyword>
<keyword id="KW-0511">Multifunctional enzyme</keyword>
<keyword id="KW-0521">NADP</keyword>
<keyword id="KW-0560">Oxidoreductase</keyword>
<keyword id="KW-0686">Riboflavin biosynthesis</keyword>
<keyword id="KW-0862">Zinc</keyword>